<comment type="function">
    <text evidence="2">Lipid phosphatase that specifically dephosphorylates the D-3 position of phosphatidylinositol 3-phosphate (PtdIns(3)P) and inositol 1,3-bisphosphate (Ins(1,3)P2).</text>
</comment>
<comment type="catalytic activity">
    <reaction evidence="2">
        <text>a 1,2-diacyl-sn-glycero-3-phospho-(1D-myo-inositol-3-phosphate) + H2O = a 1,2-diacyl-sn-glycero-3-phospho-(1D-myo-inositol) + phosphate</text>
        <dbReference type="Rhea" id="RHEA:12316"/>
        <dbReference type="ChEBI" id="CHEBI:15377"/>
        <dbReference type="ChEBI" id="CHEBI:43474"/>
        <dbReference type="ChEBI" id="CHEBI:57880"/>
        <dbReference type="ChEBI" id="CHEBI:58088"/>
        <dbReference type="EC" id="3.1.3.64"/>
    </reaction>
</comment>
<comment type="catalytic activity">
    <reaction evidence="2">
        <text>1D-myo-inositol 1,3-bisphosphate + H2O = 1D-myo-inositol 1-phosphate + phosphate</text>
        <dbReference type="Rhea" id="RHEA:57840"/>
        <dbReference type="ChEBI" id="CHEBI:15377"/>
        <dbReference type="ChEBI" id="CHEBI:43474"/>
        <dbReference type="ChEBI" id="CHEBI:58433"/>
        <dbReference type="ChEBI" id="CHEBI:83242"/>
    </reaction>
</comment>
<comment type="activity regulation">
    <text evidence="2">Interaction with MTMR9 increases phosphatase activity.</text>
</comment>
<comment type="subunit">
    <text evidence="2">Heterodimer (via C-terminus) with MTMR9 (via coiled coil domain); the interaction enhances MTMR7 catalytic activity (By similarity). Does not homodimerize (By similarity). Interacts with RAB1B (in GDP-bound form) (By similarity).</text>
</comment>
<comment type="subcellular location">
    <subcellularLocation>
        <location evidence="2">Cytoplasm</location>
    </subcellularLocation>
    <subcellularLocation>
        <location evidence="2">Endomembrane system</location>
        <topology evidence="2">Peripheral membrane protein</topology>
        <orientation evidence="2">Cytoplasmic side</orientation>
    </subcellularLocation>
    <text evidence="2">May partially localize to endosomes and/or the Golgi apparatus.</text>
</comment>
<comment type="similarity">
    <text evidence="7">Belongs to the protein-tyrosine phosphatase family. Non-receptor class myotubularin subfamily.</text>
</comment>
<feature type="chain" id="PRO_0000094942" description="Phosphatidylinositol-3-phosphate phosphatase MTMR7">
    <location>
        <begin position="1"/>
        <end position="660"/>
    </location>
</feature>
<feature type="domain" description="Myotubularin phosphatase" evidence="4">
    <location>
        <begin position="126"/>
        <end position="504"/>
    </location>
</feature>
<feature type="region of interest" description="Disordered" evidence="6">
    <location>
        <begin position="554"/>
        <end position="660"/>
    </location>
</feature>
<feature type="coiled-coil region" evidence="3">
    <location>
        <begin position="514"/>
        <end position="558"/>
    </location>
</feature>
<feature type="compositionally biased region" description="Polar residues" evidence="6">
    <location>
        <begin position="566"/>
        <end position="596"/>
    </location>
</feature>
<feature type="compositionally biased region" description="Basic and acidic residues" evidence="6">
    <location>
        <begin position="641"/>
        <end position="653"/>
    </location>
</feature>
<feature type="active site" description="Phosphocysteine intermediate" evidence="5">
    <location>
        <position position="338"/>
    </location>
</feature>
<feature type="binding site" evidence="1">
    <location>
        <position position="250"/>
    </location>
    <ligand>
        <name>a 1,2-diacyl-sn-glycero-3-phospho-(1D-myo-inositol-3-phosphate)</name>
        <dbReference type="ChEBI" id="CHEBI:58088"/>
    </ligand>
</feature>
<feature type="binding site" evidence="1">
    <location>
        <position position="275"/>
    </location>
    <ligand>
        <name>a 1,2-diacyl-sn-glycero-3-phospho-(1D-myo-inositol-3-phosphate)</name>
        <dbReference type="ChEBI" id="CHEBI:58088"/>
    </ligand>
</feature>
<feature type="binding site" evidence="1">
    <location>
        <position position="276"/>
    </location>
    <ligand>
        <name>a 1,2-diacyl-sn-glycero-3-phospho-(1D-myo-inositol-3-phosphate)</name>
        <dbReference type="ChEBI" id="CHEBI:58088"/>
    </ligand>
</feature>
<feature type="binding site" evidence="1">
    <location>
        <position position="339"/>
    </location>
    <ligand>
        <name>a 1,2-diacyl-sn-glycero-3-phospho-(1D-myo-inositol-3-phosphate)</name>
        <dbReference type="ChEBI" id="CHEBI:58088"/>
    </ligand>
</feature>
<feature type="binding site" evidence="1">
    <location>
        <position position="340"/>
    </location>
    <ligand>
        <name>a 1,2-diacyl-sn-glycero-3-phospho-(1D-myo-inositol-3-phosphate)</name>
        <dbReference type="ChEBI" id="CHEBI:58088"/>
    </ligand>
</feature>
<feature type="binding site" evidence="1">
    <location>
        <position position="341"/>
    </location>
    <ligand>
        <name>a 1,2-diacyl-sn-glycero-3-phospho-(1D-myo-inositol-3-phosphate)</name>
        <dbReference type="ChEBI" id="CHEBI:58088"/>
    </ligand>
</feature>
<feature type="binding site" evidence="1">
    <location>
        <position position="342"/>
    </location>
    <ligand>
        <name>a 1,2-diacyl-sn-glycero-3-phospho-(1D-myo-inositol-3-phosphate)</name>
        <dbReference type="ChEBI" id="CHEBI:58088"/>
    </ligand>
</feature>
<feature type="binding site" evidence="1">
    <location>
        <position position="343"/>
    </location>
    <ligand>
        <name>a 1,2-diacyl-sn-glycero-3-phospho-(1D-myo-inositol-3-phosphate)</name>
        <dbReference type="ChEBI" id="CHEBI:58088"/>
    </ligand>
</feature>
<feature type="binding site" evidence="1">
    <location>
        <position position="344"/>
    </location>
    <ligand>
        <name>a 1,2-diacyl-sn-glycero-3-phospho-(1D-myo-inositol-3-phosphate)</name>
        <dbReference type="ChEBI" id="CHEBI:58088"/>
    </ligand>
</feature>
<feature type="binding site" evidence="1">
    <location>
        <position position="384"/>
    </location>
    <ligand>
        <name>a 1,2-diacyl-sn-glycero-3-phospho-(1D-myo-inositol-3-phosphate)</name>
        <dbReference type="ChEBI" id="CHEBI:58088"/>
    </ligand>
</feature>
<feature type="modified residue" description="Phosphothreonine" evidence="2">
    <location>
        <position position="578"/>
    </location>
</feature>
<evidence type="ECO:0000250" key="1">
    <source>
        <dbReference type="UniProtKB" id="Q13614"/>
    </source>
</evidence>
<evidence type="ECO:0000250" key="2">
    <source>
        <dbReference type="UniProtKB" id="Q9Z2C9"/>
    </source>
</evidence>
<evidence type="ECO:0000255" key="3"/>
<evidence type="ECO:0000255" key="4">
    <source>
        <dbReference type="PROSITE-ProRule" id="PRU00669"/>
    </source>
</evidence>
<evidence type="ECO:0000255" key="5">
    <source>
        <dbReference type="PROSITE-ProRule" id="PRU10044"/>
    </source>
</evidence>
<evidence type="ECO:0000256" key="6">
    <source>
        <dbReference type="SAM" id="MobiDB-lite"/>
    </source>
</evidence>
<evidence type="ECO:0000305" key="7"/>
<name>MTMR7_PONAB</name>
<sequence length="660" mass="75734">MEHIRTPKVENVRLVDRVSPKKAALGTLYLTATHVIFVENSPGSRKETWILHSQISTIEKQATTATGCPLLIRCKNFQIIQLIIPQERDCHDVYISLIRLARPVKYGELYCFSFNPMLDKEEREQGWVLIDLSEEYKRMGLPNHYWQLSDVNRDYRVCDSYPTELYVPKSATAHIIVGSSKFRSRRRFPVLSYYYKDNHASICRSSQPLSGFSARCLEDEQMLQAIRKANPGSDFVYVVDTRPKLNAMANRAAGKGYENEDNYSNIKFQFIGIENIHVMRNSLQKMLEVCELKSPSMSDFLWGLENSGWLRHIKAIMDAGIFIAKAVSEEGTSVLVHCSDGWDRTAQVCSVASLLLDPHYRTLKGFMVLIEKDWISFGHKFNHRYGNLDGDPKEISPVIDQFIECVWQLMEQFPCAFEFNERFLIHIQHHIYSCQFGNFLCNSQKERQELKIQERTYSLWAHLWKNRADYLNPLFRADHSQTQGTLHLPTIPCNFMYKFWSGMYNRFEKGMQPRQSVTDYLMAVKEETQQLEEELEALEERLEKIQKVQLNCTKVKSKQSEPSKHSGFSTSDNSIANTPQDYSGNMKSFPSRSPSQGDEDSALILTQDNLKSSDPDLSANSDQESGVEDLSCRSPSGGEHAPSEDSGKDRDSDEAVFLTA</sequence>
<protein>
    <recommendedName>
        <fullName evidence="2">Phosphatidylinositol-3-phosphate phosphatase MTMR7</fullName>
        <ecNumber evidence="2">3.1.3.64</ecNumber>
    </recommendedName>
    <alternativeName>
        <fullName evidence="2">Inositol 1,3-bisphosphate phosphatase</fullName>
    </alternativeName>
    <alternativeName>
        <fullName evidence="2">Myotubularin-related protein 7</fullName>
    </alternativeName>
</protein>
<keyword id="KW-0175">Coiled coil</keyword>
<keyword id="KW-0963">Cytoplasm</keyword>
<keyword id="KW-0378">Hydrolase</keyword>
<keyword id="KW-0443">Lipid metabolism</keyword>
<keyword id="KW-0472">Membrane</keyword>
<keyword id="KW-0597">Phosphoprotein</keyword>
<keyword id="KW-1185">Reference proteome</keyword>
<reference key="1">
    <citation type="submission" date="2004-11" db="EMBL/GenBank/DDBJ databases">
        <authorList>
            <consortium name="The German cDNA consortium"/>
        </authorList>
    </citation>
    <scope>NUCLEOTIDE SEQUENCE [LARGE SCALE MRNA]</scope>
    <source>
        <tissue>Brain cortex</tissue>
    </source>
</reference>
<gene>
    <name evidence="2" type="primary">MTMR7</name>
</gene>
<organism>
    <name type="scientific">Pongo abelii</name>
    <name type="common">Sumatran orangutan</name>
    <name type="synonym">Pongo pygmaeus abelii</name>
    <dbReference type="NCBI Taxonomy" id="9601"/>
    <lineage>
        <taxon>Eukaryota</taxon>
        <taxon>Metazoa</taxon>
        <taxon>Chordata</taxon>
        <taxon>Craniata</taxon>
        <taxon>Vertebrata</taxon>
        <taxon>Euteleostomi</taxon>
        <taxon>Mammalia</taxon>
        <taxon>Eutheria</taxon>
        <taxon>Euarchontoglires</taxon>
        <taxon>Primates</taxon>
        <taxon>Haplorrhini</taxon>
        <taxon>Catarrhini</taxon>
        <taxon>Hominidae</taxon>
        <taxon>Pongo</taxon>
    </lineage>
</organism>
<proteinExistence type="evidence at transcript level"/>
<accession>Q5R6F6</accession>
<dbReference type="EC" id="3.1.3.64" evidence="2"/>
<dbReference type="EMBL" id="CR860534">
    <property type="protein sequence ID" value="CAH92660.1"/>
    <property type="molecule type" value="mRNA"/>
</dbReference>
<dbReference type="RefSeq" id="NP_001126555.1">
    <property type="nucleotide sequence ID" value="NM_001133083.1"/>
</dbReference>
<dbReference type="SMR" id="Q5R6F6"/>
<dbReference type="STRING" id="9601.ENSPPYP00000020599"/>
<dbReference type="GeneID" id="100173546"/>
<dbReference type="KEGG" id="pon:100173546"/>
<dbReference type="CTD" id="9108"/>
<dbReference type="eggNOG" id="KOG1089">
    <property type="taxonomic scope" value="Eukaryota"/>
</dbReference>
<dbReference type="InParanoid" id="Q5R6F6"/>
<dbReference type="OrthoDB" id="271628at2759"/>
<dbReference type="Proteomes" id="UP000001595">
    <property type="component" value="Unplaced"/>
</dbReference>
<dbReference type="GO" id="GO:0005737">
    <property type="term" value="C:cytoplasm"/>
    <property type="evidence" value="ECO:0007669"/>
    <property type="project" value="UniProtKB-SubCell"/>
</dbReference>
<dbReference type="GO" id="GO:0012505">
    <property type="term" value="C:endomembrane system"/>
    <property type="evidence" value="ECO:0007669"/>
    <property type="project" value="UniProtKB-SubCell"/>
</dbReference>
<dbReference type="GO" id="GO:0016020">
    <property type="term" value="C:membrane"/>
    <property type="evidence" value="ECO:0007669"/>
    <property type="project" value="UniProtKB-KW"/>
</dbReference>
<dbReference type="GO" id="GO:0016312">
    <property type="term" value="F:inositol bisphosphate phosphatase activity"/>
    <property type="evidence" value="ECO:0007669"/>
    <property type="project" value="RHEA"/>
</dbReference>
<dbReference type="GO" id="GO:0052629">
    <property type="term" value="F:phosphatidylinositol-3,5-bisphosphate 3-phosphatase activity"/>
    <property type="evidence" value="ECO:0007669"/>
    <property type="project" value="UniProtKB-ARBA"/>
</dbReference>
<dbReference type="GO" id="GO:0004438">
    <property type="term" value="F:phosphatidylinositol-3-phosphate phosphatase activity"/>
    <property type="evidence" value="ECO:0007669"/>
    <property type="project" value="UniProtKB-EC"/>
</dbReference>
<dbReference type="GO" id="GO:0006661">
    <property type="term" value="P:phosphatidylinositol biosynthetic process"/>
    <property type="evidence" value="ECO:0007669"/>
    <property type="project" value="UniProtKB-ARBA"/>
</dbReference>
<dbReference type="GO" id="GO:0046856">
    <property type="term" value="P:phosphatidylinositol dephosphorylation"/>
    <property type="evidence" value="ECO:0007669"/>
    <property type="project" value="InterPro"/>
</dbReference>
<dbReference type="CDD" id="cd13344">
    <property type="entry name" value="PH-GRAM_MTMR7"/>
    <property type="match status" value="1"/>
</dbReference>
<dbReference type="CDD" id="cd14583">
    <property type="entry name" value="PTP-MTMR7"/>
    <property type="match status" value="1"/>
</dbReference>
<dbReference type="FunFam" id="2.30.29.30:FF:000135">
    <property type="entry name" value="Myotubularin related protein 6"/>
    <property type="match status" value="1"/>
</dbReference>
<dbReference type="Gene3D" id="2.30.29.30">
    <property type="entry name" value="Pleckstrin-homology domain (PH domain)/Phosphotyrosine-binding domain (PTB)"/>
    <property type="match status" value="1"/>
</dbReference>
<dbReference type="InterPro" id="IPR036003">
    <property type="entry name" value="MTMR7_PH-GRAM"/>
</dbReference>
<dbReference type="InterPro" id="IPR030572">
    <property type="entry name" value="MTMR7_PTP"/>
</dbReference>
<dbReference type="InterPro" id="IPR030564">
    <property type="entry name" value="Myotubularin"/>
</dbReference>
<dbReference type="InterPro" id="IPR010569">
    <property type="entry name" value="Myotubularin-like_Pase_dom"/>
</dbReference>
<dbReference type="InterPro" id="IPR011993">
    <property type="entry name" value="PH-like_dom_sf"/>
</dbReference>
<dbReference type="InterPro" id="IPR029021">
    <property type="entry name" value="Prot-tyrosine_phosphatase-like"/>
</dbReference>
<dbReference type="InterPro" id="IPR016130">
    <property type="entry name" value="Tyr_Pase_AS"/>
</dbReference>
<dbReference type="InterPro" id="IPR003595">
    <property type="entry name" value="Tyr_Pase_cat"/>
</dbReference>
<dbReference type="InterPro" id="IPR000387">
    <property type="entry name" value="Tyr_Pase_dom"/>
</dbReference>
<dbReference type="PANTHER" id="PTHR10807">
    <property type="entry name" value="MYOTUBULARIN-RELATED"/>
    <property type="match status" value="1"/>
</dbReference>
<dbReference type="PANTHER" id="PTHR10807:SF35">
    <property type="entry name" value="MYOTUBULARIN-RELATED PROTEIN 7"/>
    <property type="match status" value="1"/>
</dbReference>
<dbReference type="Pfam" id="PF06602">
    <property type="entry name" value="Myotub-related"/>
    <property type="match status" value="1"/>
</dbReference>
<dbReference type="Pfam" id="PF21098">
    <property type="entry name" value="PH-GRAM_MTMR6-like"/>
    <property type="match status" value="1"/>
</dbReference>
<dbReference type="SMART" id="SM00404">
    <property type="entry name" value="PTPc_motif"/>
    <property type="match status" value="1"/>
</dbReference>
<dbReference type="SUPFAM" id="SSF52799">
    <property type="entry name" value="(Phosphotyrosine protein) phosphatases II"/>
    <property type="match status" value="1"/>
</dbReference>
<dbReference type="SUPFAM" id="SSF50729">
    <property type="entry name" value="PH domain-like"/>
    <property type="match status" value="1"/>
</dbReference>
<dbReference type="PROSITE" id="PS51339">
    <property type="entry name" value="PPASE_MYOTUBULARIN"/>
    <property type="match status" value="1"/>
</dbReference>
<dbReference type="PROSITE" id="PS00383">
    <property type="entry name" value="TYR_PHOSPHATASE_1"/>
    <property type="match status" value="1"/>
</dbReference>
<dbReference type="PROSITE" id="PS50056">
    <property type="entry name" value="TYR_PHOSPHATASE_2"/>
    <property type="match status" value="1"/>
</dbReference>